<organism>
    <name type="scientific">Mus musculus</name>
    <name type="common">Mouse</name>
    <dbReference type="NCBI Taxonomy" id="10090"/>
    <lineage>
        <taxon>Eukaryota</taxon>
        <taxon>Metazoa</taxon>
        <taxon>Chordata</taxon>
        <taxon>Craniata</taxon>
        <taxon>Vertebrata</taxon>
        <taxon>Euteleostomi</taxon>
        <taxon>Mammalia</taxon>
        <taxon>Eutheria</taxon>
        <taxon>Euarchontoglires</taxon>
        <taxon>Glires</taxon>
        <taxon>Rodentia</taxon>
        <taxon>Myomorpha</taxon>
        <taxon>Muroidea</taxon>
        <taxon>Muridae</taxon>
        <taxon>Murinae</taxon>
        <taxon>Mus</taxon>
        <taxon>Mus</taxon>
    </lineage>
</organism>
<gene>
    <name type="primary">Rhobtb2</name>
    <name type="synonym">Dbc2</name>
</gene>
<protein>
    <recommendedName>
        <fullName>Rho-related BTB domain-containing protein 2</fullName>
    </recommendedName>
    <alternativeName>
        <fullName>Deleted in breast cancer 2 gene protein homolog</fullName>
    </alternativeName>
</protein>
<keyword id="KW-0342">GTP-binding</keyword>
<keyword id="KW-0547">Nucleotide-binding</keyword>
<keyword id="KW-1185">Reference proteome</keyword>
<keyword id="KW-0677">Repeat</keyword>
<keyword id="KW-0832">Ubl conjugation</keyword>
<keyword id="KW-0833">Ubl conjugation pathway</keyword>
<evidence type="ECO:0000250" key="1">
    <source>
        <dbReference type="UniProtKB" id="Q9BYZ6"/>
    </source>
</evidence>
<evidence type="ECO:0000255" key="2"/>
<evidence type="ECO:0000255" key="3">
    <source>
        <dbReference type="PROSITE-ProRule" id="PRU00037"/>
    </source>
</evidence>
<evidence type="ECO:0000256" key="4">
    <source>
        <dbReference type="SAM" id="MobiDB-lite"/>
    </source>
</evidence>
<evidence type="ECO:0000269" key="5">
    <source>
    </source>
</evidence>
<evidence type="ECO:0000305" key="6"/>
<comment type="function">
    <text evidence="1">Regulator of cell proliferation and apoptosis. It likely functions as a substrate-adapter that recruits key substrates, e.g. MSI2, to CUL3-based ubiquitin ligase complexes for degradation. Required for MSI2 ubiquitination and degradation.</text>
</comment>
<comment type="subunit">
    <text evidence="1">Interacts with HSP90AA1 and HSP90AB1. Forms a complex with CUL3 and RBX1. Interacts (via BTB 1 domain) with CUL3. Interacts with MSI2.</text>
</comment>
<comment type="tissue specificity">
    <text evidence="5">Expressed in most tissues, with highest expression in brain.</text>
</comment>
<comment type="PTM">
    <text evidence="1">Autoubiquitinated by RHOBTB2-CUL3-RBX1 ubiquitin ligase complex.</text>
</comment>
<comment type="similarity">
    <text evidence="6">Belongs to the small GTPase superfamily. Rho family.</text>
</comment>
<dbReference type="EMBL" id="AF420001">
    <property type="protein sequence ID" value="AAL16061.1"/>
    <property type="molecule type" value="mRNA"/>
</dbReference>
<dbReference type="EMBL" id="AF420002">
    <property type="protein sequence ID" value="AAL16063.1"/>
    <property type="molecule type" value="Genomic_DNA"/>
</dbReference>
<dbReference type="EMBL" id="AK038196">
    <property type="protein sequence ID" value="BAC29946.1"/>
    <property type="molecule type" value="mRNA"/>
</dbReference>
<dbReference type="EMBL" id="BC026836">
    <property type="protein sequence ID" value="AAH26836.1"/>
    <property type="molecule type" value="mRNA"/>
</dbReference>
<dbReference type="EMBL" id="BC056954">
    <property type="protein sequence ID" value="AAH56954.1"/>
    <property type="molecule type" value="mRNA"/>
</dbReference>
<dbReference type="CCDS" id="CCDS27244.1"/>
<dbReference type="RefSeq" id="NP_705734.4">
    <property type="nucleotide sequence ID" value="NM_153514.5"/>
</dbReference>
<dbReference type="RefSeq" id="XP_030103678.1">
    <property type="nucleotide sequence ID" value="XM_030247818.2"/>
</dbReference>
<dbReference type="SMR" id="Q91V93"/>
<dbReference type="BioGRID" id="232933">
    <property type="interactions" value="1"/>
</dbReference>
<dbReference type="FunCoup" id="Q91V93">
    <property type="interactions" value="1367"/>
</dbReference>
<dbReference type="STRING" id="10090.ENSMUSP00000022665"/>
<dbReference type="iPTMnet" id="Q91V93"/>
<dbReference type="PhosphoSitePlus" id="Q91V93"/>
<dbReference type="PaxDb" id="10090-ENSMUSP00000022665"/>
<dbReference type="ProteomicsDB" id="253271"/>
<dbReference type="Antibodypedia" id="22697">
    <property type="antibodies" value="126 antibodies from 24 providers"/>
</dbReference>
<dbReference type="DNASU" id="246710"/>
<dbReference type="Ensembl" id="ENSMUST00000022665.4">
    <property type="protein sequence ID" value="ENSMUSP00000022665.3"/>
    <property type="gene ID" value="ENSMUSG00000022075.8"/>
</dbReference>
<dbReference type="GeneID" id="246710"/>
<dbReference type="KEGG" id="mmu:246710"/>
<dbReference type="UCSC" id="uc011znx.1">
    <property type="organism name" value="mouse"/>
</dbReference>
<dbReference type="AGR" id="MGI:2180557"/>
<dbReference type="CTD" id="23221"/>
<dbReference type="MGI" id="MGI:2180557">
    <property type="gene designation" value="Rhobtb2"/>
</dbReference>
<dbReference type="VEuPathDB" id="HostDB:ENSMUSG00000022075"/>
<dbReference type="eggNOG" id="KOG0393">
    <property type="taxonomic scope" value="Eukaryota"/>
</dbReference>
<dbReference type="GeneTree" id="ENSGT00940000158918"/>
<dbReference type="HOGENOM" id="CLU_015517_0_0_1"/>
<dbReference type="InParanoid" id="Q91V93"/>
<dbReference type="OMA" id="TIDKDCN"/>
<dbReference type="OrthoDB" id="6020506at2759"/>
<dbReference type="PhylomeDB" id="Q91V93"/>
<dbReference type="TreeFam" id="TF323347"/>
<dbReference type="Reactome" id="R-MMU-9013418">
    <property type="pathway name" value="RHOBTB2 GTPase cycle"/>
</dbReference>
<dbReference type="BioGRID-ORCS" id="246710">
    <property type="hits" value="3 hits in 78 CRISPR screens"/>
</dbReference>
<dbReference type="ChiTaRS" id="Rhobtb2">
    <property type="organism name" value="mouse"/>
</dbReference>
<dbReference type="PRO" id="PR:Q91V93"/>
<dbReference type="Proteomes" id="UP000000589">
    <property type="component" value="Chromosome 14"/>
</dbReference>
<dbReference type="RNAct" id="Q91V93">
    <property type="molecule type" value="protein"/>
</dbReference>
<dbReference type="Bgee" id="ENSMUSG00000022075">
    <property type="expression patterns" value="Expressed in pigmented layer of retina and 225 other cell types or tissues"/>
</dbReference>
<dbReference type="GO" id="GO:0005525">
    <property type="term" value="F:GTP binding"/>
    <property type="evidence" value="ECO:0007669"/>
    <property type="project" value="UniProtKB-KW"/>
</dbReference>
<dbReference type="GO" id="GO:0003924">
    <property type="term" value="F:GTPase activity"/>
    <property type="evidence" value="ECO:0007669"/>
    <property type="project" value="InterPro"/>
</dbReference>
<dbReference type="GO" id="GO:0007264">
    <property type="term" value="P:small GTPase-mediated signal transduction"/>
    <property type="evidence" value="ECO:0007669"/>
    <property type="project" value="InterPro"/>
</dbReference>
<dbReference type="CDD" id="cd18531">
    <property type="entry name" value="BACK_RHOBTB2"/>
    <property type="match status" value="1"/>
</dbReference>
<dbReference type="CDD" id="cd18359">
    <property type="entry name" value="BTB2_POZ_RHOBTB2"/>
    <property type="match status" value="1"/>
</dbReference>
<dbReference type="CDD" id="cd01873">
    <property type="entry name" value="RhoBTB"/>
    <property type="match status" value="1"/>
</dbReference>
<dbReference type="FunFam" id="3.30.710.10:FF:000050">
    <property type="entry name" value="Rho related BTB domain containing 2"/>
    <property type="match status" value="1"/>
</dbReference>
<dbReference type="FunFam" id="3.40.50.300:FF:000177">
    <property type="entry name" value="Rho-related BTB domain-containing protein 2"/>
    <property type="match status" value="1"/>
</dbReference>
<dbReference type="FunFam" id="3.30.710.10:FF:000014">
    <property type="entry name" value="Rho-related BTB domain-containing protein 2 isoform 1"/>
    <property type="match status" value="1"/>
</dbReference>
<dbReference type="Gene3D" id="3.40.50.300">
    <property type="entry name" value="P-loop containing nucleotide triphosphate hydrolases"/>
    <property type="match status" value="1"/>
</dbReference>
<dbReference type="Gene3D" id="3.30.710.10">
    <property type="entry name" value="Potassium Channel Kv1.1, Chain A"/>
    <property type="match status" value="3"/>
</dbReference>
<dbReference type="InterPro" id="IPR000210">
    <property type="entry name" value="BTB/POZ_dom"/>
</dbReference>
<dbReference type="InterPro" id="IPR027417">
    <property type="entry name" value="P-loop_NTPase"/>
</dbReference>
<dbReference type="InterPro" id="IPR011333">
    <property type="entry name" value="SKP1/BTB/POZ_sf"/>
</dbReference>
<dbReference type="InterPro" id="IPR001806">
    <property type="entry name" value="Small_GTPase"/>
</dbReference>
<dbReference type="InterPro" id="IPR003578">
    <property type="entry name" value="Small_GTPase_Rho"/>
</dbReference>
<dbReference type="PANTHER" id="PTHR24072">
    <property type="entry name" value="RHO FAMILY GTPASE"/>
    <property type="match status" value="1"/>
</dbReference>
<dbReference type="Pfam" id="PF00651">
    <property type="entry name" value="BTB"/>
    <property type="match status" value="3"/>
</dbReference>
<dbReference type="Pfam" id="PF00071">
    <property type="entry name" value="Ras"/>
    <property type="match status" value="1"/>
</dbReference>
<dbReference type="PRINTS" id="PR00449">
    <property type="entry name" value="RASTRNSFRMNG"/>
</dbReference>
<dbReference type="SMART" id="SM00225">
    <property type="entry name" value="BTB"/>
    <property type="match status" value="2"/>
</dbReference>
<dbReference type="SMART" id="SM00175">
    <property type="entry name" value="RAB"/>
    <property type="match status" value="1"/>
</dbReference>
<dbReference type="SMART" id="SM00173">
    <property type="entry name" value="RAS"/>
    <property type="match status" value="1"/>
</dbReference>
<dbReference type="SMART" id="SM00174">
    <property type="entry name" value="RHO"/>
    <property type="match status" value="1"/>
</dbReference>
<dbReference type="SUPFAM" id="SSF52540">
    <property type="entry name" value="P-loop containing nucleoside triphosphate hydrolases"/>
    <property type="match status" value="1"/>
</dbReference>
<dbReference type="SUPFAM" id="SSF54695">
    <property type="entry name" value="POZ domain"/>
    <property type="match status" value="2"/>
</dbReference>
<dbReference type="PROSITE" id="PS50097">
    <property type="entry name" value="BTB"/>
    <property type="match status" value="2"/>
</dbReference>
<dbReference type="PROSITE" id="PS51420">
    <property type="entry name" value="RHO"/>
    <property type="match status" value="1"/>
</dbReference>
<sequence>MDSDMDYERPNVETIKCVVVGDNAVGKTRLICARACNATLTQYQLLATHVPTVWAIDQYRVCQEVLERSRDVVDDVSVSLRLWDTFGDHHKDRRFAYGRSDVVVLCFSIANPNSLHHVKTMWYPEIKHFCPRAPVILVGCQLDLRYADLEAVNRARRPLARPIKPNEILPPEKGREVAKELGIPYYETSVVAQFGIKDVFDNAIRAALISRRHLQFWKSHLRNVQRPLLQAPFLPPKPPPPIIVVPDPPSSSEECPAHLLEDPLCADVILVLQERVRIFAHKIYLSTSSSKFYDLFLMDLSEGELGGPSGSGGPRPEDHRSHPEQHHHHHHHHHGRDFLLRAASFDVCESVDEAGGSGPAGLRASTSDGILRGNGTGYLPGRGRVLSSWSRAFVSIQEEMAEDPLTFKSRLMVVVKMDNSIQPGPFRAVLKYLYTGELGENERDLMHIAHIAELLEVFDLRMMVANILNNEAFMNQEITKAFHVRRTNRVKECLAKGTFSDVTFILDDGTISAHKPLLISSCDWMAAMFGGPFVESSTREVVFPYTSKSCMRAVLEYLYTGMFTSSPDLDDMKLIVLANRLCLPHLVALTEQYTVTGLMEATQMMVDIDGDVLVFLELAQFHCAYQLADWCLHHICTNYNNVCRKFPRDMKAMSPENQEYFEKHRWPPVWYLKEEDHYQRARKEREKEDYLHLRRQPKRRWLFWNSPSSPSSSAAGSASPSSSSSAVV</sequence>
<name>RHBT2_MOUSE</name>
<reference key="1">
    <citation type="journal article" date="2002" name="Gene">
        <title>Genomic organization and expression profile of the small GTPases of the RhoBTB family in human and mouse.</title>
        <authorList>
            <person name="Ramos S."/>
            <person name="Khademi F."/>
            <person name="Somesh B.P."/>
            <person name="Rivero F."/>
        </authorList>
    </citation>
    <scope>NUCLEOTIDE SEQUENCE [GENOMIC DNA / MRNA]</scope>
    <scope>TISSUE SPECIFICITY</scope>
</reference>
<reference key="2">
    <citation type="journal article" date="2002" name="Proc. Natl. Acad. Sci. U.S.A.">
        <title>DBC2, a candidate for a tumor suppressor gene involved in breast cancer.</title>
        <authorList>
            <person name="Hamaguchi M."/>
            <person name="Meth J.L."/>
            <person name="von Klitzing C."/>
            <person name="Wei W."/>
            <person name="Esposito D."/>
            <person name="Rodgers L."/>
            <person name="Walsh T."/>
            <person name="Welcsh P."/>
            <person name="King M.C."/>
            <person name="Wigler M.H."/>
        </authorList>
    </citation>
    <scope>NUCLEOTIDE SEQUENCE [MRNA]</scope>
    <source>
        <strain>C57BL/6J</strain>
    </source>
</reference>
<reference key="3">
    <citation type="journal article" date="2005" name="Science">
        <title>The transcriptional landscape of the mammalian genome.</title>
        <authorList>
            <person name="Carninci P."/>
            <person name="Kasukawa T."/>
            <person name="Katayama S."/>
            <person name="Gough J."/>
            <person name="Frith M.C."/>
            <person name="Maeda N."/>
            <person name="Oyama R."/>
            <person name="Ravasi T."/>
            <person name="Lenhard B."/>
            <person name="Wells C."/>
            <person name="Kodzius R."/>
            <person name="Shimokawa K."/>
            <person name="Bajic V.B."/>
            <person name="Brenner S.E."/>
            <person name="Batalov S."/>
            <person name="Forrest A.R."/>
            <person name="Zavolan M."/>
            <person name="Davis M.J."/>
            <person name="Wilming L.G."/>
            <person name="Aidinis V."/>
            <person name="Allen J.E."/>
            <person name="Ambesi-Impiombato A."/>
            <person name="Apweiler R."/>
            <person name="Aturaliya R.N."/>
            <person name="Bailey T.L."/>
            <person name="Bansal M."/>
            <person name="Baxter L."/>
            <person name="Beisel K.W."/>
            <person name="Bersano T."/>
            <person name="Bono H."/>
            <person name="Chalk A.M."/>
            <person name="Chiu K.P."/>
            <person name="Choudhary V."/>
            <person name="Christoffels A."/>
            <person name="Clutterbuck D.R."/>
            <person name="Crowe M.L."/>
            <person name="Dalla E."/>
            <person name="Dalrymple B.P."/>
            <person name="de Bono B."/>
            <person name="Della Gatta G."/>
            <person name="di Bernardo D."/>
            <person name="Down T."/>
            <person name="Engstrom P."/>
            <person name="Fagiolini M."/>
            <person name="Faulkner G."/>
            <person name="Fletcher C.F."/>
            <person name="Fukushima T."/>
            <person name="Furuno M."/>
            <person name="Futaki S."/>
            <person name="Gariboldi M."/>
            <person name="Georgii-Hemming P."/>
            <person name="Gingeras T.R."/>
            <person name="Gojobori T."/>
            <person name="Green R.E."/>
            <person name="Gustincich S."/>
            <person name="Harbers M."/>
            <person name="Hayashi Y."/>
            <person name="Hensch T.K."/>
            <person name="Hirokawa N."/>
            <person name="Hill D."/>
            <person name="Huminiecki L."/>
            <person name="Iacono M."/>
            <person name="Ikeo K."/>
            <person name="Iwama A."/>
            <person name="Ishikawa T."/>
            <person name="Jakt M."/>
            <person name="Kanapin A."/>
            <person name="Katoh M."/>
            <person name="Kawasawa Y."/>
            <person name="Kelso J."/>
            <person name="Kitamura H."/>
            <person name="Kitano H."/>
            <person name="Kollias G."/>
            <person name="Krishnan S.P."/>
            <person name="Kruger A."/>
            <person name="Kummerfeld S.K."/>
            <person name="Kurochkin I.V."/>
            <person name="Lareau L.F."/>
            <person name="Lazarevic D."/>
            <person name="Lipovich L."/>
            <person name="Liu J."/>
            <person name="Liuni S."/>
            <person name="McWilliam S."/>
            <person name="Madan Babu M."/>
            <person name="Madera M."/>
            <person name="Marchionni L."/>
            <person name="Matsuda H."/>
            <person name="Matsuzawa S."/>
            <person name="Miki H."/>
            <person name="Mignone F."/>
            <person name="Miyake S."/>
            <person name="Morris K."/>
            <person name="Mottagui-Tabar S."/>
            <person name="Mulder N."/>
            <person name="Nakano N."/>
            <person name="Nakauchi H."/>
            <person name="Ng P."/>
            <person name="Nilsson R."/>
            <person name="Nishiguchi S."/>
            <person name="Nishikawa S."/>
            <person name="Nori F."/>
            <person name="Ohara O."/>
            <person name="Okazaki Y."/>
            <person name="Orlando V."/>
            <person name="Pang K.C."/>
            <person name="Pavan W.J."/>
            <person name="Pavesi G."/>
            <person name="Pesole G."/>
            <person name="Petrovsky N."/>
            <person name="Piazza S."/>
            <person name="Reed J."/>
            <person name="Reid J.F."/>
            <person name="Ring B.Z."/>
            <person name="Ringwald M."/>
            <person name="Rost B."/>
            <person name="Ruan Y."/>
            <person name="Salzberg S.L."/>
            <person name="Sandelin A."/>
            <person name="Schneider C."/>
            <person name="Schoenbach C."/>
            <person name="Sekiguchi K."/>
            <person name="Semple C.A."/>
            <person name="Seno S."/>
            <person name="Sessa L."/>
            <person name="Sheng Y."/>
            <person name="Shibata Y."/>
            <person name="Shimada H."/>
            <person name="Shimada K."/>
            <person name="Silva D."/>
            <person name="Sinclair B."/>
            <person name="Sperling S."/>
            <person name="Stupka E."/>
            <person name="Sugiura K."/>
            <person name="Sultana R."/>
            <person name="Takenaka Y."/>
            <person name="Taki K."/>
            <person name="Tammoja K."/>
            <person name="Tan S.L."/>
            <person name="Tang S."/>
            <person name="Taylor M.S."/>
            <person name="Tegner J."/>
            <person name="Teichmann S.A."/>
            <person name="Ueda H.R."/>
            <person name="van Nimwegen E."/>
            <person name="Verardo R."/>
            <person name="Wei C.L."/>
            <person name="Yagi K."/>
            <person name="Yamanishi H."/>
            <person name="Zabarovsky E."/>
            <person name="Zhu S."/>
            <person name="Zimmer A."/>
            <person name="Hide W."/>
            <person name="Bult C."/>
            <person name="Grimmond S.M."/>
            <person name="Teasdale R.D."/>
            <person name="Liu E.T."/>
            <person name="Brusic V."/>
            <person name="Quackenbush J."/>
            <person name="Wahlestedt C."/>
            <person name="Mattick J.S."/>
            <person name="Hume D.A."/>
            <person name="Kai C."/>
            <person name="Sasaki D."/>
            <person name="Tomaru Y."/>
            <person name="Fukuda S."/>
            <person name="Kanamori-Katayama M."/>
            <person name="Suzuki M."/>
            <person name="Aoki J."/>
            <person name="Arakawa T."/>
            <person name="Iida J."/>
            <person name="Imamura K."/>
            <person name="Itoh M."/>
            <person name="Kato T."/>
            <person name="Kawaji H."/>
            <person name="Kawagashira N."/>
            <person name="Kawashima T."/>
            <person name="Kojima M."/>
            <person name="Kondo S."/>
            <person name="Konno H."/>
            <person name="Nakano K."/>
            <person name="Ninomiya N."/>
            <person name="Nishio T."/>
            <person name="Okada M."/>
            <person name="Plessy C."/>
            <person name="Shibata K."/>
            <person name="Shiraki T."/>
            <person name="Suzuki S."/>
            <person name="Tagami M."/>
            <person name="Waki K."/>
            <person name="Watahiki A."/>
            <person name="Okamura-Oho Y."/>
            <person name="Suzuki H."/>
            <person name="Kawai J."/>
            <person name="Hayashizaki Y."/>
        </authorList>
    </citation>
    <scope>NUCLEOTIDE SEQUENCE [LARGE SCALE MRNA]</scope>
    <source>
        <strain>C57BL/6J</strain>
        <tissue>Thymus</tissue>
    </source>
</reference>
<reference key="4">
    <citation type="journal article" date="2004" name="Genome Res.">
        <title>The status, quality, and expansion of the NIH full-length cDNA project: the Mammalian Gene Collection (MGC).</title>
        <authorList>
            <consortium name="The MGC Project Team"/>
        </authorList>
    </citation>
    <scope>NUCLEOTIDE SEQUENCE [LARGE SCALE MRNA]</scope>
    <source>
        <strain>FVB/N</strain>
        <tissue>Kidney</tissue>
    </source>
</reference>
<proteinExistence type="evidence at transcript level"/>
<accession>Q91V93</accession>
<accession>Q8BYU3</accession>
<accession>Q8K1A8</accession>
<feature type="chain" id="PRO_0000198963" description="Rho-related BTB domain-containing protein 2">
    <location>
        <begin position="1"/>
        <end position="728"/>
    </location>
</feature>
<feature type="domain" description="BTB 1" evidence="3">
    <location>
        <begin position="266"/>
        <end position="333"/>
    </location>
</feature>
<feature type="domain" description="BTB 2" evidence="3">
    <location>
        <begin position="500"/>
        <end position="567"/>
    </location>
</feature>
<feature type="region of interest" description="Rho-like">
    <location>
        <begin position="1"/>
        <end position="210"/>
    </location>
</feature>
<feature type="region of interest" description="Disordered" evidence="4">
    <location>
        <begin position="304"/>
        <end position="333"/>
    </location>
</feature>
<feature type="region of interest" description="Disordered" evidence="4">
    <location>
        <begin position="703"/>
        <end position="728"/>
    </location>
</feature>
<feature type="compositionally biased region" description="Gly residues" evidence="4">
    <location>
        <begin position="304"/>
        <end position="313"/>
    </location>
</feature>
<feature type="compositionally biased region" description="Basic and acidic residues" evidence="4">
    <location>
        <begin position="315"/>
        <end position="324"/>
    </location>
</feature>
<feature type="compositionally biased region" description="Low complexity" evidence="4">
    <location>
        <begin position="706"/>
        <end position="728"/>
    </location>
</feature>
<feature type="binding site" evidence="2">
    <location>
        <begin position="21"/>
        <end position="28"/>
    </location>
    <ligand>
        <name>GTP</name>
        <dbReference type="ChEBI" id="CHEBI:37565"/>
    </ligand>
</feature>
<feature type="binding site" evidence="2">
    <location>
        <begin position="84"/>
        <end position="88"/>
    </location>
    <ligand>
        <name>GTP</name>
        <dbReference type="ChEBI" id="CHEBI:37565"/>
    </ligand>
</feature>
<feature type="binding site" evidence="2">
    <location>
        <begin position="140"/>
        <end position="143"/>
    </location>
    <ligand>
        <name>GTP</name>
        <dbReference type="ChEBI" id="CHEBI:37565"/>
    </ligand>
</feature>
<feature type="sequence conflict" description="In Ref. 1; AAL16061/AAL16063." evidence="6" ref="1">
    <original>VA</original>
    <variation>FD</variation>
    <location>
        <begin position="191"/>
        <end position="192"/>
    </location>
</feature>
<feature type="sequence conflict" description="In Ref. 1; AAL16061/AAL16063." evidence="6" ref="1">
    <original>RN</original>
    <variation>KK</variation>
    <location>
        <begin position="222"/>
        <end position="223"/>
    </location>
</feature>
<feature type="sequence conflict" description="In Ref. 1; AAL16061/AAL16063." evidence="6" ref="1">
    <original>R</original>
    <variation>K</variation>
    <location>
        <position position="226"/>
    </location>
</feature>
<feature type="sequence conflict" description="In Ref. 1; AAL16061/AAL16063." evidence="6" ref="1">
    <original>LPPK</original>
    <variation>RNSE</variation>
    <location>
        <begin position="234"/>
        <end position="237"/>
    </location>
</feature>
<feature type="sequence conflict" description="In Ref. 4; AAH26836." evidence="6" ref="4">
    <original>R</original>
    <variation>G</variation>
    <location>
        <position position="363"/>
    </location>
</feature>
<feature type="sequence conflict" description="In Ref. 4; AAH26836." evidence="6" ref="4">
    <original>F</original>
    <variation>L</variation>
    <location>
        <position position="458"/>
    </location>
</feature>
<feature type="sequence conflict" description="In Ref. 1; AAL16061/AAL16063." evidence="6" ref="1">
    <original>T</original>
    <variation>A</variation>
    <location>
        <position position="503"/>
    </location>
</feature>
<feature type="sequence conflict" description="In Ref. 1; AAL16061/AAL16063." evidence="6" ref="1">
    <original>D</original>
    <variation>G</variation>
    <location>
        <position position="570"/>
    </location>
</feature>